<reference key="1">
    <citation type="submission" date="2006-08" db="EMBL/GenBank/DDBJ databases">
        <title>Complete sequence of chromosome 1 of Burkholderia cenocepacia HI2424.</title>
        <authorList>
            <person name="Copeland A."/>
            <person name="Lucas S."/>
            <person name="Lapidus A."/>
            <person name="Barry K."/>
            <person name="Detter J.C."/>
            <person name="Glavina del Rio T."/>
            <person name="Hammon N."/>
            <person name="Israni S."/>
            <person name="Pitluck S."/>
            <person name="Chain P."/>
            <person name="Malfatti S."/>
            <person name="Shin M."/>
            <person name="Vergez L."/>
            <person name="Schmutz J."/>
            <person name="Larimer F."/>
            <person name="Land M."/>
            <person name="Hauser L."/>
            <person name="Kyrpides N."/>
            <person name="Kim E."/>
            <person name="LiPuma J.J."/>
            <person name="Gonzalez C.F."/>
            <person name="Konstantinidis K."/>
            <person name="Tiedje J.M."/>
            <person name="Richardson P."/>
        </authorList>
    </citation>
    <scope>NUCLEOTIDE SEQUENCE [LARGE SCALE GENOMIC DNA]</scope>
    <source>
        <strain>HI2424</strain>
    </source>
</reference>
<accession>A0K8N3</accession>
<name>PYRG_BURCH</name>
<organism>
    <name type="scientific">Burkholderia cenocepacia (strain HI2424)</name>
    <dbReference type="NCBI Taxonomy" id="331272"/>
    <lineage>
        <taxon>Bacteria</taxon>
        <taxon>Pseudomonadati</taxon>
        <taxon>Pseudomonadota</taxon>
        <taxon>Betaproteobacteria</taxon>
        <taxon>Burkholderiales</taxon>
        <taxon>Burkholderiaceae</taxon>
        <taxon>Burkholderia</taxon>
        <taxon>Burkholderia cepacia complex</taxon>
    </lineage>
</organism>
<sequence>MTKYVFVTGGVVSSLGKGIAAASLAAILESRGLKVTLLKLDPYINVDPGTMSPFQHGEVFVTEDGAETDLDLGHYERFISTKMRKANNFTTGQIYESVIRKERRGDYLGKTVQVIPHITNEIQAFIERGAASATCGEPDVAIVEIGGTVGDIESLPFLEAARQMSLRLGRNSACFVHLTLVPYVATAGELKTKPTQHSVQKLREIGILPHVLLCRADRRIPDDESKKISMFSNVPEDAVISVWDADSIYKIPQMLHDQGLDRIICEELKLSPKDADLSMWSALVEKLENPKQEVTIGMVGKYVDLTESYKSLIEALRHASIHTSTKVNIEYIDSEELETNGVDSLKHLDAVLVPGGFGRRGTEGKIAAVRYARESKVPYLGICLGMQLAVIEFARDVVGLKQANSTEFDPDTPERVVALITEWYDREGKVETRTEESDLGGTMRLGSQRCPIKPGTMAEEIYGKDVNERHRHRYEVNNRFVPQLEAGGLIISARTPSEDLPEMMELPRSMHPWFVGVQFHPEFTSTPRDGHPLFRSFVEAALANKQARGVQA</sequence>
<proteinExistence type="inferred from homology"/>
<comment type="function">
    <text evidence="1">Catalyzes the ATP-dependent amination of UTP to CTP with either L-glutamine or ammonia as the source of nitrogen. Regulates intracellular CTP levels through interactions with the four ribonucleotide triphosphates.</text>
</comment>
<comment type="catalytic activity">
    <reaction evidence="1">
        <text>UTP + L-glutamine + ATP + H2O = CTP + L-glutamate + ADP + phosphate + 2 H(+)</text>
        <dbReference type="Rhea" id="RHEA:26426"/>
        <dbReference type="ChEBI" id="CHEBI:15377"/>
        <dbReference type="ChEBI" id="CHEBI:15378"/>
        <dbReference type="ChEBI" id="CHEBI:29985"/>
        <dbReference type="ChEBI" id="CHEBI:30616"/>
        <dbReference type="ChEBI" id="CHEBI:37563"/>
        <dbReference type="ChEBI" id="CHEBI:43474"/>
        <dbReference type="ChEBI" id="CHEBI:46398"/>
        <dbReference type="ChEBI" id="CHEBI:58359"/>
        <dbReference type="ChEBI" id="CHEBI:456216"/>
        <dbReference type="EC" id="6.3.4.2"/>
    </reaction>
</comment>
<comment type="catalytic activity">
    <reaction evidence="1">
        <text>L-glutamine + H2O = L-glutamate + NH4(+)</text>
        <dbReference type="Rhea" id="RHEA:15889"/>
        <dbReference type="ChEBI" id="CHEBI:15377"/>
        <dbReference type="ChEBI" id="CHEBI:28938"/>
        <dbReference type="ChEBI" id="CHEBI:29985"/>
        <dbReference type="ChEBI" id="CHEBI:58359"/>
    </reaction>
</comment>
<comment type="catalytic activity">
    <reaction evidence="1">
        <text>UTP + NH4(+) + ATP = CTP + ADP + phosphate + 2 H(+)</text>
        <dbReference type="Rhea" id="RHEA:16597"/>
        <dbReference type="ChEBI" id="CHEBI:15378"/>
        <dbReference type="ChEBI" id="CHEBI:28938"/>
        <dbReference type="ChEBI" id="CHEBI:30616"/>
        <dbReference type="ChEBI" id="CHEBI:37563"/>
        <dbReference type="ChEBI" id="CHEBI:43474"/>
        <dbReference type="ChEBI" id="CHEBI:46398"/>
        <dbReference type="ChEBI" id="CHEBI:456216"/>
    </reaction>
</comment>
<comment type="activity regulation">
    <text evidence="1">Allosterically activated by GTP, when glutamine is the substrate; GTP has no effect on the reaction when ammonia is the substrate. The allosteric effector GTP functions by stabilizing the protein conformation that binds the tetrahedral intermediate(s) formed during glutamine hydrolysis. Inhibited by the product CTP, via allosteric rather than competitive inhibition.</text>
</comment>
<comment type="pathway">
    <text evidence="1">Pyrimidine metabolism; CTP biosynthesis via de novo pathway; CTP from UDP: step 2/2.</text>
</comment>
<comment type="subunit">
    <text evidence="1">Homotetramer.</text>
</comment>
<comment type="miscellaneous">
    <text evidence="1">CTPSs have evolved a hybrid strategy for distinguishing between UTP and CTP. The overlapping regions of the product feedback inhibitory and substrate sites recognize a common feature in both compounds, the triphosphate moiety. To differentiate isosteric substrate and product pyrimidine rings, an additional pocket far from the expected kinase/ligase catalytic site, specifically recognizes the cytosine and ribose portions of the product inhibitor.</text>
</comment>
<comment type="similarity">
    <text evidence="1">Belongs to the CTP synthase family.</text>
</comment>
<keyword id="KW-0067">ATP-binding</keyword>
<keyword id="KW-0315">Glutamine amidotransferase</keyword>
<keyword id="KW-0436">Ligase</keyword>
<keyword id="KW-0460">Magnesium</keyword>
<keyword id="KW-0479">Metal-binding</keyword>
<keyword id="KW-0547">Nucleotide-binding</keyword>
<keyword id="KW-0665">Pyrimidine biosynthesis</keyword>
<gene>
    <name evidence="1" type="primary">pyrG</name>
    <name type="ordered locus">Bcen2424_2109</name>
</gene>
<dbReference type="EC" id="6.3.4.2" evidence="1"/>
<dbReference type="EMBL" id="CP000458">
    <property type="protein sequence ID" value="ABK08860.1"/>
    <property type="molecule type" value="Genomic_DNA"/>
</dbReference>
<dbReference type="RefSeq" id="WP_011549471.1">
    <property type="nucleotide sequence ID" value="NC_008542.1"/>
</dbReference>
<dbReference type="SMR" id="A0K8N3"/>
<dbReference type="KEGG" id="bch:Bcen2424_2109"/>
<dbReference type="HOGENOM" id="CLU_011675_5_0_4"/>
<dbReference type="UniPathway" id="UPA00159">
    <property type="reaction ID" value="UER00277"/>
</dbReference>
<dbReference type="GO" id="GO:0005829">
    <property type="term" value="C:cytosol"/>
    <property type="evidence" value="ECO:0007669"/>
    <property type="project" value="TreeGrafter"/>
</dbReference>
<dbReference type="GO" id="GO:0005524">
    <property type="term" value="F:ATP binding"/>
    <property type="evidence" value="ECO:0007669"/>
    <property type="project" value="UniProtKB-KW"/>
</dbReference>
<dbReference type="GO" id="GO:0003883">
    <property type="term" value="F:CTP synthase activity"/>
    <property type="evidence" value="ECO:0007669"/>
    <property type="project" value="UniProtKB-UniRule"/>
</dbReference>
<dbReference type="GO" id="GO:0004359">
    <property type="term" value="F:glutaminase activity"/>
    <property type="evidence" value="ECO:0007669"/>
    <property type="project" value="RHEA"/>
</dbReference>
<dbReference type="GO" id="GO:0042802">
    <property type="term" value="F:identical protein binding"/>
    <property type="evidence" value="ECO:0007669"/>
    <property type="project" value="TreeGrafter"/>
</dbReference>
<dbReference type="GO" id="GO:0046872">
    <property type="term" value="F:metal ion binding"/>
    <property type="evidence" value="ECO:0007669"/>
    <property type="project" value="UniProtKB-KW"/>
</dbReference>
<dbReference type="GO" id="GO:0044210">
    <property type="term" value="P:'de novo' CTP biosynthetic process"/>
    <property type="evidence" value="ECO:0007669"/>
    <property type="project" value="UniProtKB-UniRule"/>
</dbReference>
<dbReference type="GO" id="GO:0019856">
    <property type="term" value="P:pyrimidine nucleobase biosynthetic process"/>
    <property type="evidence" value="ECO:0007669"/>
    <property type="project" value="TreeGrafter"/>
</dbReference>
<dbReference type="CDD" id="cd03113">
    <property type="entry name" value="CTPS_N"/>
    <property type="match status" value="1"/>
</dbReference>
<dbReference type="CDD" id="cd01746">
    <property type="entry name" value="GATase1_CTP_Synthase"/>
    <property type="match status" value="1"/>
</dbReference>
<dbReference type="FunFam" id="3.40.50.300:FF:000009">
    <property type="entry name" value="CTP synthase"/>
    <property type="match status" value="1"/>
</dbReference>
<dbReference type="FunFam" id="3.40.50.880:FF:000002">
    <property type="entry name" value="CTP synthase"/>
    <property type="match status" value="1"/>
</dbReference>
<dbReference type="Gene3D" id="3.40.50.880">
    <property type="match status" value="1"/>
</dbReference>
<dbReference type="Gene3D" id="3.40.50.300">
    <property type="entry name" value="P-loop containing nucleotide triphosphate hydrolases"/>
    <property type="match status" value="1"/>
</dbReference>
<dbReference type="HAMAP" id="MF_01227">
    <property type="entry name" value="PyrG"/>
    <property type="match status" value="1"/>
</dbReference>
<dbReference type="InterPro" id="IPR029062">
    <property type="entry name" value="Class_I_gatase-like"/>
</dbReference>
<dbReference type="InterPro" id="IPR004468">
    <property type="entry name" value="CTP_synthase"/>
</dbReference>
<dbReference type="InterPro" id="IPR017456">
    <property type="entry name" value="CTP_synthase_N"/>
</dbReference>
<dbReference type="InterPro" id="IPR017926">
    <property type="entry name" value="GATASE"/>
</dbReference>
<dbReference type="InterPro" id="IPR033828">
    <property type="entry name" value="GATase1_CTP_Synthase"/>
</dbReference>
<dbReference type="InterPro" id="IPR027417">
    <property type="entry name" value="P-loop_NTPase"/>
</dbReference>
<dbReference type="NCBIfam" id="NF003792">
    <property type="entry name" value="PRK05380.1"/>
    <property type="match status" value="1"/>
</dbReference>
<dbReference type="NCBIfam" id="TIGR00337">
    <property type="entry name" value="PyrG"/>
    <property type="match status" value="1"/>
</dbReference>
<dbReference type="PANTHER" id="PTHR11550">
    <property type="entry name" value="CTP SYNTHASE"/>
    <property type="match status" value="1"/>
</dbReference>
<dbReference type="PANTHER" id="PTHR11550:SF0">
    <property type="entry name" value="CTP SYNTHASE-RELATED"/>
    <property type="match status" value="1"/>
</dbReference>
<dbReference type="Pfam" id="PF06418">
    <property type="entry name" value="CTP_synth_N"/>
    <property type="match status" value="1"/>
</dbReference>
<dbReference type="Pfam" id="PF00117">
    <property type="entry name" value="GATase"/>
    <property type="match status" value="1"/>
</dbReference>
<dbReference type="SUPFAM" id="SSF52317">
    <property type="entry name" value="Class I glutamine amidotransferase-like"/>
    <property type="match status" value="1"/>
</dbReference>
<dbReference type="SUPFAM" id="SSF52540">
    <property type="entry name" value="P-loop containing nucleoside triphosphate hydrolases"/>
    <property type="match status" value="1"/>
</dbReference>
<dbReference type="PROSITE" id="PS51273">
    <property type="entry name" value="GATASE_TYPE_1"/>
    <property type="match status" value="1"/>
</dbReference>
<evidence type="ECO:0000255" key="1">
    <source>
        <dbReference type="HAMAP-Rule" id="MF_01227"/>
    </source>
</evidence>
<feature type="chain" id="PRO_1000139398" description="CTP synthase">
    <location>
        <begin position="1"/>
        <end position="552"/>
    </location>
</feature>
<feature type="domain" description="Glutamine amidotransferase type-1" evidence="1">
    <location>
        <begin position="295"/>
        <end position="547"/>
    </location>
</feature>
<feature type="region of interest" description="Amidoligase domain" evidence="1">
    <location>
        <begin position="1"/>
        <end position="270"/>
    </location>
</feature>
<feature type="active site" description="Nucleophile; for glutamine hydrolysis" evidence="1">
    <location>
        <position position="383"/>
    </location>
</feature>
<feature type="active site" evidence="1">
    <location>
        <position position="520"/>
    </location>
</feature>
<feature type="active site" evidence="1">
    <location>
        <position position="522"/>
    </location>
</feature>
<feature type="binding site" evidence="1">
    <location>
        <position position="13"/>
    </location>
    <ligand>
        <name>CTP</name>
        <dbReference type="ChEBI" id="CHEBI:37563"/>
        <note>allosteric inhibitor</note>
    </ligand>
</feature>
<feature type="binding site" evidence="1">
    <location>
        <position position="13"/>
    </location>
    <ligand>
        <name>UTP</name>
        <dbReference type="ChEBI" id="CHEBI:46398"/>
    </ligand>
</feature>
<feature type="binding site" evidence="1">
    <location>
        <begin position="14"/>
        <end position="19"/>
    </location>
    <ligand>
        <name>ATP</name>
        <dbReference type="ChEBI" id="CHEBI:30616"/>
    </ligand>
</feature>
<feature type="binding site" evidence="1">
    <location>
        <position position="71"/>
    </location>
    <ligand>
        <name>ATP</name>
        <dbReference type="ChEBI" id="CHEBI:30616"/>
    </ligand>
</feature>
<feature type="binding site" evidence="1">
    <location>
        <position position="71"/>
    </location>
    <ligand>
        <name>Mg(2+)</name>
        <dbReference type="ChEBI" id="CHEBI:18420"/>
    </ligand>
</feature>
<feature type="binding site" evidence="1">
    <location>
        <position position="144"/>
    </location>
    <ligand>
        <name>Mg(2+)</name>
        <dbReference type="ChEBI" id="CHEBI:18420"/>
    </ligand>
</feature>
<feature type="binding site" evidence="1">
    <location>
        <begin position="151"/>
        <end position="153"/>
    </location>
    <ligand>
        <name>CTP</name>
        <dbReference type="ChEBI" id="CHEBI:37563"/>
        <note>allosteric inhibitor</note>
    </ligand>
</feature>
<feature type="binding site" evidence="1">
    <location>
        <begin position="191"/>
        <end position="196"/>
    </location>
    <ligand>
        <name>CTP</name>
        <dbReference type="ChEBI" id="CHEBI:37563"/>
        <note>allosteric inhibitor</note>
    </ligand>
</feature>
<feature type="binding site" evidence="1">
    <location>
        <begin position="191"/>
        <end position="196"/>
    </location>
    <ligand>
        <name>UTP</name>
        <dbReference type="ChEBI" id="CHEBI:46398"/>
    </ligand>
</feature>
<feature type="binding site" evidence="1">
    <location>
        <position position="227"/>
    </location>
    <ligand>
        <name>CTP</name>
        <dbReference type="ChEBI" id="CHEBI:37563"/>
        <note>allosteric inhibitor</note>
    </ligand>
</feature>
<feature type="binding site" evidence="1">
    <location>
        <position position="227"/>
    </location>
    <ligand>
        <name>UTP</name>
        <dbReference type="ChEBI" id="CHEBI:46398"/>
    </ligand>
</feature>
<feature type="binding site" evidence="1">
    <location>
        <position position="356"/>
    </location>
    <ligand>
        <name>L-glutamine</name>
        <dbReference type="ChEBI" id="CHEBI:58359"/>
    </ligand>
</feature>
<feature type="binding site" evidence="1">
    <location>
        <begin position="384"/>
        <end position="387"/>
    </location>
    <ligand>
        <name>L-glutamine</name>
        <dbReference type="ChEBI" id="CHEBI:58359"/>
    </ligand>
</feature>
<feature type="binding site" evidence="1">
    <location>
        <position position="407"/>
    </location>
    <ligand>
        <name>L-glutamine</name>
        <dbReference type="ChEBI" id="CHEBI:58359"/>
    </ligand>
</feature>
<feature type="binding site" evidence="1">
    <location>
        <position position="473"/>
    </location>
    <ligand>
        <name>L-glutamine</name>
        <dbReference type="ChEBI" id="CHEBI:58359"/>
    </ligand>
</feature>
<protein>
    <recommendedName>
        <fullName evidence="1">CTP synthase</fullName>
        <ecNumber evidence="1">6.3.4.2</ecNumber>
    </recommendedName>
    <alternativeName>
        <fullName evidence="1">Cytidine 5'-triphosphate synthase</fullName>
    </alternativeName>
    <alternativeName>
        <fullName evidence="1">Cytidine triphosphate synthetase</fullName>
        <shortName evidence="1">CTP synthetase</shortName>
        <shortName evidence="1">CTPS</shortName>
    </alternativeName>
    <alternativeName>
        <fullName evidence="1">UTP--ammonia ligase</fullName>
    </alternativeName>
</protein>